<proteinExistence type="inferred from homology"/>
<organism>
    <name type="scientific">Campylobacter lari (strain RM2100 / D67 / ATCC BAA-1060)</name>
    <dbReference type="NCBI Taxonomy" id="306263"/>
    <lineage>
        <taxon>Bacteria</taxon>
        <taxon>Pseudomonadati</taxon>
        <taxon>Campylobacterota</taxon>
        <taxon>Epsilonproteobacteria</taxon>
        <taxon>Campylobacterales</taxon>
        <taxon>Campylobacteraceae</taxon>
        <taxon>Campylobacter</taxon>
    </lineage>
</organism>
<accession>B9KFX4</accession>
<name>SYC_CAMLR</name>
<dbReference type="EC" id="6.1.1.16" evidence="1"/>
<dbReference type="EMBL" id="CP000932">
    <property type="protein sequence ID" value="ACM63959.1"/>
    <property type="molecule type" value="Genomic_DNA"/>
</dbReference>
<dbReference type="RefSeq" id="WP_012661342.1">
    <property type="nucleotide sequence ID" value="NC_012039.1"/>
</dbReference>
<dbReference type="SMR" id="B9KFX4"/>
<dbReference type="STRING" id="306263.Cla_0630"/>
<dbReference type="KEGG" id="cla:CLA_0630"/>
<dbReference type="PATRIC" id="fig|306263.5.peg.610"/>
<dbReference type="eggNOG" id="COG0215">
    <property type="taxonomic scope" value="Bacteria"/>
</dbReference>
<dbReference type="HOGENOM" id="CLU_013528_0_1_7"/>
<dbReference type="Proteomes" id="UP000007727">
    <property type="component" value="Chromosome"/>
</dbReference>
<dbReference type="GO" id="GO:0005829">
    <property type="term" value="C:cytosol"/>
    <property type="evidence" value="ECO:0007669"/>
    <property type="project" value="TreeGrafter"/>
</dbReference>
<dbReference type="GO" id="GO:0005524">
    <property type="term" value="F:ATP binding"/>
    <property type="evidence" value="ECO:0007669"/>
    <property type="project" value="UniProtKB-UniRule"/>
</dbReference>
<dbReference type="GO" id="GO:0004817">
    <property type="term" value="F:cysteine-tRNA ligase activity"/>
    <property type="evidence" value="ECO:0007669"/>
    <property type="project" value="UniProtKB-UniRule"/>
</dbReference>
<dbReference type="GO" id="GO:0008270">
    <property type="term" value="F:zinc ion binding"/>
    <property type="evidence" value="ECO:0007669"/>
    <property type="project" value="UniProtKB-UniRule"/>
</dbReference>
<dbReference type="GO" id="GO:0006423">
    <property type="term" value="P:cysteinyl-tRNA aminoacylation"/>
    <property type="evidence" value="ECO:0007669"/>
    <property type="project" value="UniProtKB-UniRule"/>
</dbReference>
<dbReference type="CDD" id="cd00672">
    <property type="entry name" value="CysRS_core"/>
    <property type="match status" value="1"/>
</dbReference>
<dbReference type="Gene3D" id="1.20.120.1910">
    <property type="entry name" value="Cysteine-tRNA ligase, C-terminal anti-codon recognition domain"/>
    <property type="match status" value="1"/>
</dbReference>
<dbReference type="Gene3D" id="3.40.50.620">
    <property type="entry name" value="HUPs"/>
    <property type="match status" value="1"/>
</dbReference>
<dbReference type="HAMAP" id="MF_00041">
    <property type="entry name" value="Cys_tRNA_synth"/>
    <property type="match status" value="1"/>
</dbReference>
<dbReference type="InterPro" id="IPR015803">
    <property type="entry name" value="Cys-tRNA-ligase"/>
</dbReference>
<dbReference type="InterPro" id="IPR015273">
    <property type="entry name" value="Cys-tRNA-synt_Ia_DALR"/>
</dbReference>
<dbReference type="InterPro" id="IPR024909">
    <property type="entry name" value="Cys-tRNA/MSH_ligase"/>
</dbReference>
<dbReference type="InterPro" id="IPR014729">
    <property type="entry name" value="Rossmann-like_a/b/a_fold"/>
</dbReference>
<dbReference type="InterPro" id="IPR032678">
    <property type="entry name" value="tRNA-synt_1_cat_dom"/>
</dbReference>
<dbReference type="InterPro" id="IPR009080">
    <property type="entry name" value="tRNAsynth_Ia_anticodon-bd"/>
</dbReference>
<dbReference type="NCBIfam" id="TIGR00435">
    <property type="entry name" value="cysS"/>
    <property type="match status" value="1"/>
</dbReference>
<dbReference type="PANTHER" id="PTHR10890:SF3">
    <property type="entry name" value="CYSTEINE--TRNA LIGASE, CYTOPLASMIC"/>
    <property type="match status" value="1"/>
</dbReference>
<dbReference type="PANTHER" id="PTHR10890">
    <property type="entry name" value="CYSTEINYL-TRNA SYNTHETASE"/>
    <property type="match status" value="1"/>
</dbReference>
<dbReference type="Pfam" id="PF09190">
    <property type="entry name" value="DALR_2"/>
    <property type="match status" value="1"/>
</dbReference>
<dbReference type="Pfam" id="PF01406">
    <property type="entry name" value="tRNA-synt_1e"/>
    <property type="match status" value="1"/>
</dbReference>
<dbReference type="PRINTS" id="PR00983">
    <property type="entry name" value="TRNASYNTHCYS"/>
</dbReference>
<dbReference type="SMART" id="SM00840">
    <property type="entry name" value="DALR_2"/>
    <property type="match status" value="1"/>
</dbReference>
<dbReference type="SUPFAM" id="SSF47323">
    <property type="entry name" value="Anticodon-binding domain of a subclass of class I aminoacyl-tRNA synthetases"/>
    <property type="match status" value="1"/>
</dbReference>
<dbReference type="SUPFAM" id="SSF52374">
    <property type="entry name" value="Nucleotidylyl transferase"/>
    <property type="match status" value="1"/>
</dbReference>
<comment type="catalytic activity">
    <reaction evidence="1">
        <text>tRNA(Cys) + L-cysteine + ATP = L-cysteinyl-tRNA(Cys) + AMP + diphosphate</text>
        <dbReference type="Rhea" id="RHEA:17773"/>
        <dbReference type="Rhea" id="RHEA-COMP:9661"/>
        <dbReference type="Rhea" id="RHEA-COMP:9679"/>
        <dbReference type="ChEBI" id="CHEBI:30616"/>
        <dbReference type="ChEBI" id="CHEBI:33019"/>
        <dbReference type="ChEBI" id="CHEBI:35235"/>
        <dbReference type="ChEBI" id="CHEBI:78442"/>
        <dbReference type="ChEBI" id="CHEBI:78517"/>
        <dbReference type="ChEBI" id="CHEBI:456215"/>
        <dbReference type="EC" id="6.1.1.16"/>
    </reaction>
</comment>
<comment type="cofactor">
    <cofactor evidence="1">
        <name>Zn(2+)</name>
        <dbReference type="ChEBI" id="CHEBI:29105"/>
    </cofactor>
    <text evidence="1">Binds 1 zinc ion per subunit.</text>
</comment>
<comment type="subunit">
    <text evidence="1">Monomer.</text>
</comment>
<comment type="subcellular location">
    <subcellularLocation>
        <location evidence="1">Cytoplasm</location>
    </subcellularLocation>
</comment>
<comment type="similarity">
    <text evidence="1">Belongs to the class-I aminoacyl-tRNA synthetase family.</text>
</comment>
<evidence type="ECO:0000255" key="1">
    <source>
        <dbReference type="HAMAP-Rule" id="MF_00041"/>
    </source>
</evidence>
<protein>
    <recommendedName>
        <fullName evidence="1">Cysteine--tRNA ligase</fullName>
        <ecNumber evidence="1">6.1.1.16</ecNumber>
    </recommendedName>
    <alternativeName>
        <fullName evidence="1">Cysteinyl-tRNA synthetase</fullName>
        <shortName evidence="1">CysRS</shortName>
    </alternativeName>
</protein>
<feature type="chain" id="PRO_1000199049" description="Cysteine--tRNA ligase">
    <location>
        <begin position="1"/>
        <end position="460"/>
    </location>
</feature>
<feature type="short sequence motif" description="'HIGH' region">
    <location>
        <begin position="29"/>
        <end position="39"/>
    </location>
</feature>
<feature type="short sequence motif" description="'KMSKS' region">
    <location>
        <begin position="259"/>
        <end position="263"/>
    </location>
</feature>
<feature type="binding site" evidence="1">
    <location>
        <position position="27"/>
    </location>
    <ligand>
        <name>Zn(2+)</name>
        <dbReference type="ChEBI" id="CHEBI:29105"/>
    </ligand>
</feature>
<feature type="binding site" evidence="1">
    <location>
        <position position="202"/>
    </location>
    <ligand>
        <name>Zn(2+)</name>
        <dbReference type="ChEBI" id="CHEBI:29105"/>
    </ligand>
</feature>
<feature type="binding site" evidence="1">
    <location>
        <position position="227"/>
    </location>
    <ligand>
        <name>Zn(2+)</name>
        <dbReference type="ChEBI" id="CHEBI:29105"/>
    </ligand>
</feature>
<feature type="binding site" evidence="1">
    <location>
        <position position="231"/>
    </location>
    <ligand>
        <name>Zn(2+)</name>
        <dbReference type="ChEBI" id="CHEBI:29105"/>
    </ligand>
</feature>
<feature type="binding site" evidence="1">
    <location>
        <position position="262"/>
    </location>
    <ligand>
        <name>ATP</name>
        <dbReference type="ChEBI" id="CHEBI:30616"/>
    </ligand>
</feature>
<keyword id="KW-0030">Aminoacyl-tRNA synthetase</keyword>
<keyword id="KW-0067">ATP-binding</keyword>
<keyword id="KW-0963">Cytoplasm</keyword>
<keyword id="KW-0436">Ligase</keyword>
<keyword id="KW-0479">Metal-binding</keyword>
<keyword id="KW-0547">Nucleotide-binding</keyword>
<keyword id="KW-0648">Protein biosynthesis</keyword>
<keyword id="KW-1185">Reference proteome</keyword>
<keyword id="KW-0862">Zinc</keyword>
<reference key="1">
    <citation type="journal article" date="2008" name="Foodborne Pathog. Dis.">
        <title>The complete genome sequence and analysis of the human pathogen Campylobacter lari.</title>
        <authorList>
            <person name="Miller W.G."/>
            <person name="Wang G."/>
            <person name="Binnewies T.T."/>
            <person name="Parker C.T."/>
        </authorList>
    </citation>
    <scope>NUCLEOTIDE SEQUENCE [LARGE SCALE GENOMIC DNA]</scope>
    <source>
        <strain>RM2100 / D67 / ATCC BAA-1060</strain>
    </source>
</reference>
<sequence>MVFFDSVLKKKCEFIPHEAKKANIYLCGPTVYDDAHLGHARSSVCFDFLRRVLLASGYEVVFARNYTDIDDKILKKMQESGKSLKEITNFYIKRYEEDMQALNILEPDFKPKATAYIEQMITYIEKLLELNLAYKLEDGIYFDTSKDDKYFYISKRNLEDNQSRLEESVAKKNDSDFVLWKFDEKFYPASFGKGRPGWHTECVVMIESIFKDKLDIHAGGIDLLFPHHENEACQCRCKNNHELANFWLHNGFVQINGEKMSKSLGNSFFLKDSLKLFNGEVLRFYLLSVHYRAHFNYALEDLQAAKKRLDKFYRLKKRLNLNAFIDEKTIIESKVSQNILDVLNDDLNASKALALLDEFINESNIYLDQNPKDKAYKIQLEKTLKELSFIFGIGFIDTIKYFQFGISEEKCQEIEEKITLRNKAKQEKNYVLADQIRDDLAKENILLMDTPNGVVWEKNG</sequence>
<gene>
    <name evidence="1" type="primary">cysS</name>
    <name type="ordered locus">Cla_0630</name>
</gene>